<feature type="chain" id="PRO_0000111612" description="Ribonuclease HII">
    <location>
        <begin position="1"/>
        <end position="193"/>
    </location>
</feature>
<feature type="domain" description="RNase H type-2" evidence="2">
    <location>
        <begin position="15"/>
        <end position="193"/>
    </location>
</feature>
<feature type="binding site" evidence="1">
    <location>
        <position position="21"/>
    </location>
    <ligand>
        <name>a divalent metal cation</name>
        <dbReference type="ChEBI" id="CHEBI:60240"/>
    </ligand>
</feature>
<feature type="binding site" evidence="1">
    <location>
        <position position="22"/>
    </location>
    <ligand>
        <name>a divalent metal cation</name>
        <dbReference type="ChEBI" id="CHEBI:60240"/>
    </ligand>
</feature>
<feature type="binding site" evidence="1">
    <location>
        <position position="112"/>
    </location>
    <ligand>
        <name>a divalent metal cation</name>
        <dbReference type="ChEBI" id="CHEBI:60240"/>
    </ligand>
</feature>
<reference key="1">
    <citation type="journal article" date="2005" name="PLoS Biol.">
        <title>The genome sequence of Rickettsia felis identifies the first putative conjugative plasmid in an obligate intracellular parasite.</title>
        <authorList>
            <person name="Ogata H."/>
            <person name="Renesto P."/>
            <person name="Audic S."/>
            <person name="Robert C."/>
            <person name="Blanc G."/>
            <person name="Fournier P.-E."/>
            <person name="Parinello H."/>
            <person name="Claverie J.-M."/>
            <person name="Raoult D."/>
        </authorList>
    </citation>
    <scope>NUCLEOTIDE SEQUENCE [LARGE SCALE GENOMIC DNA]</scope>
    <source>
        <strain>ATCC VR-1525 / URRWXCal2</strain>
    </source>
</reference>
<organism>
    <name type="scientific">Rickettsia felis (strain ATCC VR-1525 / URRWXCal2)</name>
    <name type="common">Rickettsia azadi</name>
    <dbReference type="NCBI Taxonomy" id="315456"/>
    <lineage>
        <taxon>Bacteria</taxon>
        <taxon>Pseudomonadati</taxon>
        <taxon>Pseudomonadota</taxon>
        <taxon>Alphaproteobacteria</taxon>
        <taxon>Rickettsiales</taxon>
        <taxon>Rickettsiaceae</taxon>
        <taxon>Rickettsieae</taxon>
        <taxon>Rickettsia</taxon>
        <taxon>spotted fever group</taxon>
    </lineage>
</organism>
<gene>
    <name evidence="1" type="primary">rnhB</name>
    <name type="ordered locus">RF_1061</name>
</gene>
<name>RNH2_RICFE</name>
<proteinExistence type="inferred from homology"/>
<sequence>MEVDLLHFEKKYHNYIVAGIDEAGRGPLAGPVVASAVIIDNTNIIPGIKDSKKLSKKKRELLYEQITSNYVWAAAIISHIEIDEINILEATKKACSIAAANLSLKPEIVLVDGNMPFKDKRFVSMINGDNLSLSIAAASIVAKVTRDRLMLDLSTEFPQYLWHKNSGYGTKEHIEAINMHGLSPYHRRSFKCC</sequence>
<keyword id="KW-0963">Cytoplasm</keyword>
<keyword id="KW-0255">Endonuclease</keyword>
<keyword id="KW-0378">Hydrolase</keyword>
<keyword id="KW-0464">Manganese</keyword>
<keyword id="KW-0479">Metal-binding</keyword>
<keyword id="KW-0540">Nuclease</keyword>
<comment type="function">
    <text evidence="1">Endonuclease that specifically degrades the RNA of RNA-DNA hybrids.</text>
</comment>
<comment type="catalytic activity">
    <reaction evidence="1">
        <text>Endonucleolytic cleavage to 5'-phosphomonoester.</text>
        <dbReference type="EC" id="3.1.26.4"/>
    </reaction>
</comment>
<comment type="cofactor">
    <cofactor evidence="1">
        <name>Mn(2+)</name>
        <dbReference type="ChEBI" id="CHEBI:29035"/>
    </cofactor>
    <cofactor evidence="1">
        <name>Mg(2+)</name>
        <dbReference type="ChEBI" id="CHEBI:18420"/>
    </cofactor>
    <text evidence="1">Manganese or magnesium. Binds 1 divalent metal ion per monomer in the absence of substrate. May bind a second metal ion after substrate binding.</text>
</comment>
<comment type="subcellular location">
    <subcellularLocation>
        <location evidence="1">Cytoplasm</location>
    </subcellularLocation>
</comment>
<comment type="similarity">
    <text evidence="1">Belongs to the RNase HII family.</text>
</comment>
<evidence type="ECO:0000255" key="1">
    <source>
        <dbReference type="HAMAP-Rule" id="MF_00052"/>
    </source>
</evidence>
<evidence type="ECO:0000255" key="2">
    <source>
        <dbReference type="PROSITE-ProRule" id="PRU01319"/>
    </source>
</evidence>
<accession>Q4UKL5</accession>
<dbReference type="EC" id="3.1.26.4" evidence="1"/>
<dbReference type="EMBL" id="CP000053">
    <property type="protein sequence ID" value="AAY61912.1"/>
    <property type="molecule type" value="Genomic_DNA"/>
</dbReference>
<dbReference type="SMR" id="Q4UKL5"/>
<dbReference type="STRING" id="315456.RF_1061"/>
<dbReference type="KEGG" id="rfe:RF_1061"/>
<dbReference type="eggNOG" id="COG0164">
    <property type="taxonomic scope" value="Bacteria"/>
</dbReference>
<dbReference type="HOGENOM" id="CLU_036532_3_1_5"/>
<dbReference type="OrthoDB" id="9803420at2"/>
<dbReference type="Proteomes" id="UP000008548">
    <property type="component" value="Chromosome"/>
</dbReference>
<dbReference type="GO" id="GO:0005737">
    <property type="term" value="C:cytoplasm"/>
    <property type="evidence" value="ECO:0007669"/>
    <property type="project" value="UniProtKB-SubCell"/>
</dbReference>
<dbReference type="GO" id="GO:0032299">
    <property type="term" value="C:ribonuclease H2 complex"/>
    <property type="evidence" value="ECO:0007669"/>
    <property type="project" value="TreeGrafter"/>
</dbReference>
<dbReference type="GO" id="GO:0030145">
    <property type="term" value="F:manganese ion binding"/>
    <property type="evidence" value="ECO:0007669"/>
    <property type="project" value="UniProtKB-UniRule"/>
</dbReference>
<dbReference type="GO" id="GO:0003723">
    <property type="term" value="F:RNA binding"/>
    <property type="evidence" value="ECO:0007669"/>
    <property type="project" value="InterPro"/>
</dbReference>
<dbReference type="GO" id="GO:0004523">
    <property type="term" value="F:RNA-DNA hybrid ribonuclease activity"/>
    <property type="evidence" value="ECO:0007669"/>
    <property type="project" value="UniProtKB-UniRule"/>
</dbReference>
<dbReference type="GO" id="GO:0043137">
    <property type="term" value="P:DNA replication, removal of RNA primer"/>
    <property type="evidence" value="ECO:0007669"/>
    <property type="project" value="TreeGrafter"/>
</dbReference>
<dbReference type="GO" id="GO:0006298">
    <property type="term" value="P:mismatch repair"/>
    <property type="evidence" value="ECO:0007669"/>
    <property type="project" value="TreeGrafter"/>
</dbReference>
<dbReference type="CDD" id="cd07182">
    <property type="entry name" value="RNase_HII_bacteria_HII_like"/>
    <property type="match status" value="1"/>
</dbReference>
<dbReference type="Gene3D" id="3.30.420.10">
    <property type="entry name" value="Ribonuclease H-like superfamily/Ribonuclease H"/>
    <property type="match status" value="1"/>
</dbReference>
<dbReference type="HAMAP" id="MF_00052_B">
    <property type="entry name" value="RNase_HII_B"/>
    <property type="match status" value="1"/>
</dbReference>
<dbReference type="InterPro" id="IPR022898">
    <property type="entry name" value="RNase_HII"/>
</dbReference>
<dbReference type="InterPro" id="IPR001352">
    <property type="entry name" value="RNase_HII/HIII"/>
</dbReference>
<dbReference type="InterPro" id="IPR024567">
    <property type="entry name" value="RNase_HII/HIII_dom"/>
</dbReference>
<dbReference type="InterPro" id="IPR012337">
    <property type="entry name" value="RNaseH-like_sf"/>
</dbReference>
<dbReference type="InterPro" id="IPR036397">
    <property type="entry name" value="RNaseH_sf"/>
</dbReference>
<dbReference type="NCBIfam" id="NF000595">
    <property type="entry name" value="PRK00015.1-3"/>
    <property type="match status" value="1"/>
</dbReference>
<dbReference type="PANTHER" id="PTHR10954">
    <property type="entry name" value="RIBONUCLEASE H2 SUBUNIT A"/>
    <property type="match status" value="1"/>
</dbReference>
<dbReference type="PANTHER" id="PTHR10954:SF18">
    <property type="entry name" value="RIBONUCLEASE HII"/>
    <property type="match status" value="1"/>
</dbReference>
<dbReference type="Pfam" id="PF01351">
    <property type="entry name" value="RNase_HII"/>
    <property type="match status" value="1"/>
</dbReference>
<dbReference type="SUPFAM" id="SSF53098">
    <property type="entry name" value="Ribonuclease H-like"/>
    <property type="match status" value="1"/>
</dbReference>
<dbReference type="PROSITE" id="PS51975">
    <property type="entry name" value="RNASE_H_2"/>
    <property type="match status" value="1"/>
</dbReference>
<protein>
    <recommendedName>
        <fullName evidence="1">Ribonuclease HII</fullName>
        <shortName evidence="1">RNase HII</shortName>
        <ecNumber evidence="1">3.1.26.4</ecNumber>
    </recommendedName>
</protein>